<sequence length="207" mass="22192">MRRSKTAAPWPGTIVPRAFFNRMATEVAPQLLNKILAAADGRAGRIVEVEAYAGALDPAAHTYRGKTPRNATMFGPPGHFYVYFTYGMHWCCNCVCGPDGAGTGVLIRALEPLHGLEQMRAARPPRTRDRDLCRGPARLTQAMGIGGAQDGVDLVGARDGFAIVDDGMAPPADLAGGPRIGIRVGQDLPWRWSVPGNRYVSGAVPRI</sequence>
<accession>Q1BTJ3</accession>
<feature type="chain" id="PRO_0000265002" description="Putative 3-methyladenine DNA glycosylase">
    <location>
        <begin position="1"/>
        <end position="207"/>
    </location>
</feature>
<gene>
    <name type="ordered locus">Bcen_2161</name>
</gene>
<proteinExistence type="inferred from homology"/>
<comment type="similarity">
    <text evidence="1">Belongs to the DNA glycosylase MPG family.</text>
</comment>
<dbReference type="EC" id="3.2.2.-" evidence="1"/>
<dbReference type="EMBL" id="CP000378">
    <property type="protein sequence ID" value="ABF77062.1"/>
    <property type="molecule type" value="Genomic_DNA"/>
</dbReference>
<dbReference type="SMR" id="Q1BTJ3"/>
<dbReference type="HOGENOM" id="CLU_060471_3_0_4"/>
<dbReference type="GO" id="GO:0003905">
    <property type="term" value="F:alkylbase DNA N-glycosylase activity"/>
    <property type="evidence" value="ECO:0007669"/>
    <property type="project" value="InterPro"/>
</dbReference>
<dbReference type="GO" id="GO:0003677">
    <property type="term" value="F:DNA binding"/>
    <property type="evidence" value="ECO:0007669"/>
    <property type="project" value="InterPro"/>
</dbReference>
<dbReference type="GO" id="GO:0006284">
    <property type="term" value="P:base-excision repair"/>
    <property type="evidence" value="ECO:0007669"/>
    <property type="project" value="InterPro"/>
</dbReference>
<dbReference type="CDD" id="cd00540">
    <property type="entry name" value="AAG"/>
    <property type="match status" value="1"/>
</dbReference>
<dbReference type="FunFam" id="3.10.300.10:FF:000001">
    <property type="entry name" value="Putative 3-methyladenine DNA glycosylase"/>
    <property type="match status" value="1"/>
</dbReference>
<dbReference type="Gene3D" id="3.10.300.10">
    <property type="entry name" value="Methylpurine-DNA glycosylase (MPG)"/>
    <property type="match status" value="1"/>
</dbReference>
<dbReference type="HAMAP" id="MF_00527">
    <property type="entry name" value="3MGH"/>
    <property type="match status" value="1"/>
</dbReference>
<dbReference type="InterPro" id="IPR011034">
    <property type="entry name" value="Formyl_transferase-like_C_sf"/>
</dbReference>
<dbReference type="InterPro" id="IPR003180">
    <property type="entry name" value="MPG"/>
</dbReference>
<dbReference type="InterPro" id="IPR036995">
    <property type="entry name" value="MPG_sf"/>
</dbReference>
<dbReference type="NCBIfam" id="TIGR00567">
    <property type="entry name" value="3mg"/>
    <property type="match status" value="1"/>
</dbReference>
<dbReference type="NCBIfam" id="NF002003">
    <property type="entry name" value="PRK00802.1-3"/>
    <property type="match status" value="1"/>
</dbReference>
<dbReference type="PANTHER" id="PTHR10429">
    <property type="entry name" value="DNA-3-METHYLADENINE GLYCOSYLASE"/>
    <property type="match status" value="1"/>
</dbReference>
<dbReference type="PANTHER" id="PTHR10429:SF0">
    <property type="entry name" value="DNA-3-METHYLADENINE GLYCOSYLASE"/>
    <property type="match status" value="1"/>
</dbReference>
<dbReference type="Pfam" id="PF02245">
    <property type="entry name" value="Pur_DNA_glyco"/>
    <property type="match status" value="1"/>
</dbReference>
<dbReference type="SUPFAM" id="SSF50486">
    <property type="entry name" value="FMT C-terminal domain-like"/>
    <property type="match status" value="1"/>
</dbReference>
<keyword id="KW-0227">DNA damage</keyword>
<keyword id="KW-0234">DNA repair</keyword>
<keyword id="KW-0378">Hydrolase</keyword>
<protein>
    <recommendedName>
        <fullName evidence="1">Putative 3-methyladenine DNA glycosylase</fullName>
        <ecNumber evidence="1">3.2.2.-</ecNumber>
    </recommendedName>
</protein>
<name>3MGH_BURO1</name>
<reference key="1">
    <citation type="submission" date="2006-05" db="EMBL/GenBank/DDBJ databases">
        <title>Complete sequence of chromosome 1 of Burkholderia cenocepacia AU 1054.</title>
        <authorList>
            <consortium name="US DOE Joint Genome Institute"/>
            <person name="Copeland A."/>
            <person name="Lucas S."/>
            <person name="Lapidus A."/>
            <person name="Barry K."/>
            <person name="Detter J.C."/>
            <person name="Glavina del Rio T."/>
            <person name="Hammon N."/>
            <person name="Israni S."/>
            <person name="Dalin E."/>
            <person name="Tice H."/>
            <person name="Pitluck S."/>
            <person name="Chain P."/>
            <person name="Malfatti S."/>
            <person name="Shin M."/>
            <person name="Vergez L."/>
            <person name="Schmutz J."/>
            <person name="Larimer F."/>
            <person name="Land M."/>
            <person name="Hauser L."/>
            <person name="Kyrpides N."/>
            <person name="Lykidis A."/>
            <person name="LiPuma J.J."/>
            <person name="Konstantinidis K."/>
            <person name="Tiedje J.M."/>
            <person name="Richardson P."/>
        </authorList>
    </citation>
    <scope>NUCLEOTIDE SEQUENCE [LARGE SCALE GENOMIC DNA]</scope>
    <source>
        <strain>AU 1054</strain>
    </source>
</reference>
<organism>
    <name type="scientific">Burkholderia orbicola (strain AU 1054)</name>
    <dbReference type="NCBI Taxonomy" id="331271"/>
    <lineage>
        <taxon>Bacteria</taxon>
        <taxon>Pseudomonadati</taxon>
        <taxon>Pseudomonadota</taxon>
        <taxon>Betaproteobacteria</taxon>
        <taxon>Burkholderiales</taxon>
        <taxon>Burkholderiaceae</taxon>
        <taxon>Burkholderia</taxon>
        <taxon>Burkholderia cepacia complex</taxon>
        <taxon>Burkholderia orbicola</taxon>
    </lineage>
</organism>
<evidence type="ECO:0000255" key="1">
    <source>
        <dbReference type="HAMAP-Rule" id="MF_00527"/>
    </source>
</evidence>